<reference key="1">
    <citation type="journal article" date="2005" name="BMC Genomics">
        <title>Characterization of 954 bovine full-CDS cDNA sequences.</title>
        <authorList>
            <person name="Harhay G.P."/>
            <person name="Sonstegard T.S."/>
            <person name="Keele J.W."/>
            <person name="Heaton M.P."/>
            <person name="Clawson M.L."/>
            <person name="Snelling W.M."/>
            <person name="Wiedmann R.T."/>
            <person name="Van Tassell C.P."/>
            <person name="Smith T.P.L."/>
        </authorList>
    </citation>
    <scope>NUCLEOTIDE SEQUENCE [LARGE SCALE MRNA]</scope>
</reference>
<reference key="2">
    <citation type="submission" date="2006-04" db="EMBL/GenBank/DDBJ databases">
        <authorList>
            <consortium name="NIH - Mammalian Gene Collection (MGC) project"/>
        </authorList>
    </citation>
    <scope>NUCLEOTIDE SEQUENCE [LARGE SCALE MRNA]</scope>
    <source>
        <strain>Hereford</strain>
        <tissue>Thymus</tissue>
    </source>
</reference>
<sequence length="489" mass="56377">MASAASVTSLADEVNCPVCQGTLREPVTIDCGHNFCRVCLTRYLEITSPDPEEPPTCPLCKEPFRPGNFRPNWQLANVVENIERLKLVSQMDLDEEDVCPEHGEKVYFFCEDDEMQLCVVCREAWEHRAHTVRFLEDAAGPYREQIQKCLECLRKEREEIQEIQSRENRRIQVLLTQVATKKQKVISEFAHLSQFLEEQQNILLDQLEKLDEDILKHRDEFDVLVTGEIGRFNTLIEELEEKKERPARELLTDIRSTLIRCETRRCRKPVAISPELGQRIRDFPQQAFPLQREMKMFLEKLSFELDYEPAHISLDPRTSHPKLLLSEDYQQARFSYKWQKSPDNPQRFDRATCVLAHGGFTGGRHTWVVSVDLAHGGSCTLGVVSKDIRRKGELRMRPEEGVWAVRLAWGFVSALSSFPTRLTLEEQPQQVRVSIDYEVGWVTFANAVTQEPIYTFTASFTQKVFPFFGLWGRGSKFSLSSQEGAATLS</sequence>
<feature type="chain" id="PRO_0000244603" description="Tripartite motif-containing protein 10">
    <location>
        <begin position="1"/>
        <end position="489"/>
    </location>
</feature>
<feature type="domain" description="B30.2/SPRY" evidence="6">
    <location>
        <begin position="292"/>
        <end position="486"/>
    </location>
</feature>
<feature type="zinc finger region" description="RING-type" evidence="5">
    <location>
        <begin position="16"/>
        <end position="61"/>
    </location>
</feature>
<feature type="zinc finger region" description="B box-type" evidence="4">
    <location>
        <begin position="94"/>
        <end position="135"/>
    </location>
</feature>
<feature type="coiled-coil region" evidence="3">
    <location>
        <begin position="142"/>
        <end position="245"/>
    </location>
</feature>
<feature type="binding site" evidence="4">
    <location>
        <position position="99"/>
    </location>
    <ligand>
        <name>Zn(2+)</name>
        <dbReference type="ChEBI" id="CHEBI:29105"/>
    </ligand>
</feature>
<feature type="binding site" evidence="4">
    <location>
        <position position="102"/>
    </location>
    <ligand>
        <name>Zn(2+)</name>
        <dbReference type="ChEBI" id="CHEBI:29105"/>
    </ligand>
</feature>
<feature type="binding site" evidence="4">
    <location>
        <position position="121"/>
    </location>
    <ligand>
        <name>Zn(2+)</name>
        <dbReference type="ChEBI" id="CHEBI:29105"/>
    </ligand>
</feature>
<feature type="binding site" evidence="4">
    <location>
        <position position="127"/>
    </location>
    <ligand>
        <name>Zn(2+)</name>
        <dbReference type="ChEBI" id="CHEBI:29105"/>
    </ligand>
</feature>
<evidence type="ECO:0000250" key="1">
    <source>
        <dbReference type="UniProtKB" id="Q9UDY6"/>
    </source>
</evidence>
<evidence type="ECO:0000250" key="2">
    <source>
        <dbReference type="UniProtKB" id="Q9WUH5"/>
    </source>
</evidence>
<evidence type="ECO:0000255" key="3"/>
<evidence type="ECO:0000255" key="4">
    <source>
        <dbReference type="PROSITE-ProRule" id="PRU00024"/>
    </source>
</evidence>
<evidence type="ECO:0000255" key="5">
    <source>
        <dbReference type="PROSITE-ProRule" id="PRU00175"/>
    </source>
</evidence>
<evidence type="ECO:0000255" key="6">
    <source>
        <dbReference type="PROSITE-ProRule" id="PRU00548"/>
    </source>
</evidence>
<evidence type="ECO:0000305" key="7"/>
<dbReference type="EMBL" id="BT020956">
    <property type="protein sequence ID" value="AAX08973.1"/>
    <property type="molecule type" value="mRNA"/>
</dbReference>
<dbReference type="EMBL" id="BC114866">
    <property type="protein sequence ID" value="AAI14867.1"/>
    <property type="molecule type" value="mRNA"/>
</dbReference>
<dbReference type="RefSeq" id="NP_001015607.1">
    <property type="nucleotide sequence ID" value="NM_001015607.1"/>
</dbReference>
<dbReference type="SMR" id="Q5E9G4"/>
<dbReference type="FunCoup" id="Q5E9G4">
    <property type="interactions" value="10"/>
</dbReference>
<dbReference type="STRING" id="9913.ENSBTAP00000009909"/>
<dbReference type="PaxDb" id="9913-ENSBTAP00000009909"/>
<dbReference type="GeneID" id="515628"/>
<dbReference type="KEGG" id="bta:515628"/>
<dbReference type="CTD" id="10107"/>
<dbReference type="eggNOG" id="KOG2177">
    <property type="taxonomic scope" value="Eukaryota"/>
</dbReference>
<dbReference type="InParanoid" id="Q5E9G4"/>
<dbReference type="OrthoDB" id="9410880at2759"/>
<dbReference type="Proteomes" id="UP000009136">
    <property type="component" value="Unplaced"/>
</dbReference>
<dbReference type="GO" id="GO:0005737">
    <property type="term" value="C:cytoplasm"/>
    <property type="evidence" value="ECO:0000318"/>
    <property type="project" value="GO_Central"/>
</dbReference>
<dbReference type="GO" id="GO:0061630">
    <property type="term" value="F:ubiquitin protein ligase activity"/>
    <property type="evidence" value="ECO:0000318"/>
    <property type="project" value="GO_Central"/>
</dbReference>
<dbReference type="GO" id="GO:0008270">
    <property type="term" value="F:zinc ion binding"/>
    <property type="evidence" value="ECO:0007669"/>
    <property type="project" value="UniProtKB-KW"/>
</dbReference>
<dbReference type="GO" id="GO:0045087">
    <property type="term" value="P:innate immune response"/>
    <property type="evidence" value="ECO:0000318"/>
    <property type="project" value="GO_Central"/>
</dbReference>
<dbReference type="CDD" id="cd16593">
    <property type="entry name" value="RING-HC_TRIM10_C-IV"/>
    <property type="match status" value="1"/>
</dbReference>
<dbReference type="CDD" id="cd15827">
    <property type="entry name" value="SPRY_PRY_TRIM10"/>
    <property type="match status" value="1"/>
</dbReference>
<dbReference type="FunFam" id="2.60.120.920:FF:000044">
    <property type="entry name" value="Tripartite motif-containing protein 10"/>
    <property type="match status" value="1"/>
</dbReference>
<dbReference type="Gene3D" id="2.60.120.920">
    <property type="match status" value="1"/>
</dbReference>
<dbReference type="Gene3D" id="3.30.160.60">
    <property type="entry name" value="Classic Zinc Finger"/>
    <property type="match status" value="1"/>
</dbReference>
<dbReference type="Gene3D" id="3.30.40.10">
    <property type="entry name" value="Zinc/RING finger domain, C3HC4 (zinc finger)"/>
    <property type="match status" value="1"/>
</dbReference>
<dbReference type="InterPro" id="IPR001870">
    <property type="entry name" value="B30.2/SPRY"/>
</dbReference>
<dbReference type="InterPro" id="IPR043136">
    <property type="entry name" value="B30.2/SPRY_sf"/>
</dbReference>
<dbReference type="InterPro" id="IPR003879">
    <property type="entry name" value="Butyrophylin_SPRY"/>
</dbReference>
<dbReference type="InterPro" id="IPR013320">
    <property type="entry name" value="ConA-like_dom_sf"/>
</dbReference>
<dbReference type="InterPro" id="IPR006574">
    <property type="entry name" value="PRY"/>
</dbReference>
<dbReference type="InterPro" id="IPR003877">
    <property type="entry name" value="SPRY_dom"/>
</dbReference>
<dbReference type="InterPro" id="IPR050143">
    <property type="entry name" value="TRIM/RBCC"/>
</dbReference>
<dbReference type="InterPro" id="IPR042784">
    <property type="entry name" value="TRIM10_RING-HC"/>
</dbReference>
<dbReference type="InterPro" id="IPR000315">
    <property type="entry name" value="Znf_B-box"/>
</dbReference>
<dbReference type="InterPro" id="IPR018957">
    <property type="entry name" value="Znf_C3HC4_RING-type"/>
</dbReference>
<dbReference type="InterPro" id="IPR001841">
    <property type="entry name" value="Znf_RING"/>
</dbReference>
<dbReference type="InterPro" id="IPR013083">
    <property type="entry name" value="Znf_RING/FYVE/PHD"/>
</dbReference>
<dbReference type="InterPro" id="IPR017907">
    <property type="entry name" value="Znf_RING_CS"/>
</dbReference>
<dbReference type="PANTHER" id="PTHR24103">
    <property type="entry name" value="E3 UBIQUITIN-PROTEIN LIGASE TRIM"/>
    <property type="match status" value="1"/>
</dbReference>
<dbReference type="Pfam" id="PF13765">
    <property type="entry name" value="PRY"/>
    <property type="match status" value="1"/>
</dbReference>
<dbReference type="Pfam" id="PF00622">
    <property type="entry name" value="SPRY"/>
    <property type="match status" value="1"/>
</dbReference>
<dbReference type="Pfam" id="PF00643">
    <property type="entry name" value="zf-B_box"/>
    <property type="match status" value="1"/>
</dbReference>
<dbReference type="Pfam" id="PF00097">
    <property type="entry name" value="zf-C3HC4"/>
    <property type="match status" value="1"/>
</dbReference>
<dbReference type="PRINTS" id="PR01407">
    <property type="entry name" value="BUTYPHLNCDUF"/>
</dbReference>
<dbReference type="SMART" id="SM00336">
    <property type="entry name" value="BBOX"/>
    <property type="match status" value="1"/>
</dbReference>
<dbReference type="SMART" id="SM00589">
    <property type="entry name" value="PRY"/>
    <property type="match status" value="1"/>
</dbReference>
<dbReference type="SMART" id="SM00184">
    <property type="entry name" value="RING"/>
    <property type="match status" value="1"/>
</dbReference>
<dbReference type="SMART" id="SM00449">
    <property type="entry name" value="SPRY"/>
    <property type="match status" value="1"/>
</dbReference>
<dbReference type="SUPFAM" id="SSF57845">
    <property type="entry name" value="B-box zinc-binding domain"/>
    <property type="match status" value="1"/>
</dbReference>
<dbReference type="SUPFAM" id="SSF49899">
    <property type="entry name" value="Concanavalin A-like lectins/glucanases"/>
    <property type="match status" value="1"/>
</dbReference>
<dbReference type="SUPFAM" id="SSF57850">
    <property type="entry name" value="RING/U-box"/>
    <property type="match status" value="1"/>
</dbReference>
<dbReference type="PROSITE" id="PS50188">
    <property type="entry name" value="B302_SPRY"/>
    <property type="match status" value="1"/>
</dbReference>
<dbReference type="PROSITE" id="PS50119">
    <property type="entry name" value="ZF_BBOX"/>
    <property type="match status" value="1"/>
</dbReference>
<dbReference type="PROSITE" id="PS00518">
    <property type="entry name" value="ZF_RING_1"/>
    <property type="match status" value="1"/>
</dbReference>
<dbReference type="PROSITE" id="PS50089">
    <property type="entry name" value="ZF_RING_2"/>
    <property type="match status" value="1"/>
</dbReference>
<keyword id="KW-0175">Coiled coil</keyword>
<keyword id="KW-0963">Cytoplasm</keyword>
<keyword id="KW-0479">Metal-binding</keyword>
<keyword id="KW-1185">Reference proteome</keyword>
<keyword id="KW-0862">Zinc</keyword>
<keyword id="KW-0863">Zinc-finger</keyword>
<gene>
    <name type="primary">TRIM10</name>
</gene>
<proteinExistence type="evidence at transcript level"/>
<comment type="function">
    <text evidence="1 2">E3 ligase that plays an essential role in the differentiation and survival of terminal erythroid cells. May directly bind to PTEN and promote its ubiquitination, resulting in its proteasomal degradation and activation of hypertrophic signaling (By similarity). In addition, plays a role in immune response regulation by repressing the phosphorylation of STAT1 and STAT2 in the interferon/JAK/STAT signaling pathway independent of its E3 ligase activity. Mechanistically, interacts with the intracellular domain of IFNAR1 and thereby inhibits the association between TYK2 and IFNAR1 (By similarity).</text>
</comment>
<comment type="subunit">
    <text evidence="1">Interacts with IFNAR1; this interaction prevents association of IFNAR1 with TYK2.</text>
</comment>
<comment type="subcellular location">
    <subcellularLocation>
        <location evidence="1">Cytoplasm</location>
    </subcellularLocation>
</comment>
<comment type="similarity">
    <text evidence="7">Belongs to the TRIM/RBCC family.</text>
</comment>
<name>TRI10_BOVIN</name>
<protein>
    <recommendedName>
        <fullName>Tripartite motif-containing protein 10</fullName>
    </recommendedName>
</protein>
<accession>Q5E9G4</accession>
<organism>
    <name type="scientific">Bos taurus</name>
    <name type="common">Bovine</name>
    <dbReference type="NCBI Taxonomy" id="9913"/>
    <lineage>
        <taxon>Eukaryota</taxon>
        <taxon>Metazoa</taxon>
        <taxon>Chordata</taxon>
        <taxon>Craniata</taxon>
        <taxon>Vertebrata</taxon>
        <taxon>Euteleostomi</taxon>
        <taxon>Mammalia</taxon>
        <taxon>Eutheria</taxon>
        <taxon>Laurasiatheria</taxon>
        <taxon>Artiodactyla</taxon>
        <taxon>Ruminantia</taxon>
        <taxon>Pecora</taxon>
        <taxon>Bovidae</taxon>
        <taxon>Bovinae</taxon>
        <taxon>Bos</taxon>
    </lineage>
</organism>